<name>MATK_KNIUV</name>
<sequence>MEELQRYLEKGRSRQQHFLYPLLFQEYIYALAHDHGLNSSIFYEPVEIISYDNKSSLALVKRLITRIYQQNYLISSVNDSNQNQFLGHNAFFYSHFFSQIISESFAIIVEIPFSLRLVSFFEEKEIPIYHNLRSIHSIFPFLEGKLSHLNYVSDILIPHPIHMEILVQTLQCRVQDVPFLHLLRFFLHEYHNWNSLLITQNKSIYFFSKENKRIFRLLYNSYVFECEFLLVFFRKQSYYLRLTSSGTFLERTHFYRKIEHLPIEHFFVVCRNYFHRTRWFFKNPFMHYVRYQRKAILASRGTHFLMKKWKYHFVNFWQYYFHFWSRPYRIHINHLSNYSFYFLGYLSSLLINSSAVRNQMLENSFLIDTVTNKFDTIVPVILLIRSLSKAKFCTVSGHPISKPIWADLSDSDIIDRFGRICRNLSHYHSGSSKKQDLYRIKYILRLSCARTLARKHKSTVRTFLRRLGSGLLEEFFTEEEQVLSLIFPKRTPFTLHGSHRERIWYLDIICINDLVNHSXLS</sequence>
<accession>Q7YJG2</accession>
<organism>
    <name type="scientific">Kniphofia uvaria</name>
    <name type="common">Red-hot poker</name>
    <name type="synonym">Tritoma uvaria</name>
    <dbReference type="NCBI Taxonomy" id="49724"/>
    <lineage>
        <taxon>Eukaryota</taxon>
        <taxon>Viridiplantae</taxon>
        <taxon>Streptophyta</taxon>
        <taxon>Embryophyta</taxon>
        <taxon>Tracheophyta</taxon>
        <taxon>Spermatophyta</taxon>
        <taxon>Magnoliopsida</taxon>
        <taxon>Liliopsida</taxon>
        <taxon>Asparagales</taxon>
        <taxon>Asphodelaceae</taxon>
        <taxon>Asphodeloideae</taxon>
        <taxon>Kniphofia</taxon>
    </lineage>
</organism>
<keyword id="KW-0150">Chloroplast</keyword>
<keyword id="KW-0507">mRNA processing</keyword>
<keyword id="KW-0934">Plastid</keyword>
<keyword id="KW-0694">RNA-binding</keyword>
<keyword id="KW-0819">tRNA processing</keyword>
<proteinExistence type="inferred from homology"/>
<geneLocation type="chloroplast"/>
<reference key="1">
    <citation type="journal article" date="2003" name="Taxon">
        <title>Phylogenetic relationships in Asphodelaceae (subfamily Alooideae) inferred from chloroplast DNA sequences (rbcL, matK) and from genomic fingerprinting (ISSR).</title>
        <authorList>
            <person name="Treutlein J."/>
            <person name="Smith G.F."/>
            <person name="van Wyk B.-E."/>
            <person name="Wink M."/>
        </authorList>
    </citation>
    <scope>NUCLEOTIDE SEQUENCE [GENOMIC DNA]</scope>
</reference>
<protein>
    <recommendedName>
        <fullName evidence="1">Maturase K</fullName>
    </recommendedName>
    <alternativeName>
        <fullName evidence="1">Intron maturase</fullName>
    </alternativeName>
</protein>
<feature type="chain" id="PRO_0000143447" description="Maturase K">
    <location>
        <begin position="1"/>
        <end position="521"/>
    </location>
</feature>
<comment type="function">
    <text evidence="1">Usually encoded in the trnK tRNA gene intron. Probably assists in splicing its own and other chloroplast group II introns.</text>
</comment>
<comment type="subcellular location">
    <subcellularLocation>
        <location>Plastid</location>
        <location>Chloroplast</location>
    </subcellularLocation>
</comment>
<comment type="similarity">
    <text evidence="1">Belongs to the intron maturase 2 family. MatK subfamily.</text>
</comment>
<gene>
    <name evidence="1" type="primary">matK</name>
</gene>
<dbReference type="EMBL" id="AJ511425">
    <property type="protein sequence ID" value="CAD54569.1"/>
    <property type="molecule type" value="Genomic_DNA"/>
</dbReference>
<dbReference type="GO" id="GO:0009507">
    <property type="term" value="C:chloroplast"/>
    <property type="evidence" value="ECO:0007669"/>
    <property type="project" value="UniProtKB-SubCell"/>
</dbReference>
<dbReference type="GO" id="GO:0003723">
    <property type="term" value="F:RNA binding"/>
    <property type="evidence" value="ECO:0007669"/>
    <property type="project" value="UniProtKB-KW"/>
</dbReference>
<dbReference type="GO" id="GO:0006397">
    <property type="term" value="P:mRNA processing"/>
    <property type="evidence" value="ECO:0007669"/>
    <property type="project" value="UniProtKB-KW"/>
</dbReference>
<dbReference type="GO" id="GO:0008380">
    <property type="term" value="P:RNA splicing"/>
    <property type="evidence" value="ECO:0007669"/>
    <property type="project" value="UniProtKB-UniRule"/>
</dbReference>
<dbReference type="GO" id="GO:0008033">
    <property type="term" value="P:tRNA processing"/>
    <property type="evidence" value="ECO:0007669"/>
    <property type="project" value="UniProtKB-KW"/>
</dbReference>
<dbReference type="HAMAP" id="MF_01390">
    <property type="entry name" value="MatK"/>
    <property type="match status" value="1"/>
</dbReference>
<dbReference type="InterPro" id="IPR024937">
    <property type="entry name" value="Domain_X"/>
</dbReference>
<dbReference type="InterPro" id="IPR002866">
    <property type="entry name" value="Maturase_MatK"/>
</dbReference>
<dbReference type="InterPro" id="IPR024942">
    <property type="entry name" value="Maturase_MatK_N"/>
</dbReference>
<dbReference type="PANTHER" id="PTHR34811">
    <property type="entry name" value="MATURASE K"/>
    <property type="match status" value="1"/>
</dbReference>
<dbReference type="PANTHER" id="PTHR34811:SF1">
    <property type="entry name" value="MATURASE K"/>
    <property type="match status" value="1"/>
</dbReference>
<dbReference type="Pfam" id="PF01348">
    <property type="entry name" value="Intron_maturas2"/>
    <property type="match status" value="1"/>
</dbReference>
<dbReference type="Pfam" id="PF01824">
    <property type="entry name" value="MatK_N"/>
    <property type="match status" value="1"/>
</dbReference>
<evidence type="ECO:0000255" key="1">
    <source>
        <dbReference type="HAMAP-Rule" id="MF_01390"/>
    </source>
</evidence>